<keyword id="KW-0067">ATP-binding</keyword>
<keyword id="KW-0997">Cell inner membrane</keyword>
<keyword id="KW-1003">Cell membrane</keyword>
<keyword id="KW-0186">Copper</keyword>
<keyword id="KW-0418">Kinase</keyword>
<keyword id="KW-0472">Membrane</keyword>
<keyword id="KW-0547">Nucleotide-binding</keyword>
<keyword id="KW-0597">Phosphoprotein</keyword>
<keyword id="KW-1185">Reference proteome</keyword>
<keyword id="KW-0808">Transferase</keyword>
<keyword id="KW-0812">Transmembrane</keyword>
<keyword id="KW-1133">Transmembrane helix</keyword>
<keyword id="KW-0902">Two-component regulatory system</keyword>
<protein>
    <recommendedName>
        <fullName evidence="1">Sensor histidine kinase CusS</fullName>
        <ecNumber evidence="1">2.7.13.3</ecNumber>
    </recommendedName>
</protein>
<comment type="function">
    <text evidence="1">Member of the two-component regulatory system CusS/CusR involved in response to copper and silver. Acts as a copper/silver ion sensor. Activates CusR by phosphorylation.</text>
</comment>
<comment type="catalytic activity">
    <reaction evidence="1">
        <text>ATP + protein L-histidine = ADP + protein N-phospho-L-histidine.</text>
        <dbReference type="EC" id="2.7.13.3"/>
    </reaction>
</comment>
<comment type="subcellular location">
    <subcellularLocation>
        <location evidence="1">Cell inner membrane</location>
        <topology evidence="2">Multi-pass membrane protein</topology>
    </subcellularLocation>
</comment>
<comment type="PTM">
    <text evidence="1">Autophosphorylated.</text>
</comment>
<accession>Q8FK37</accession>
<sequence length="480" mass="53776">MVSKPFQRPFSLATRLTFFISLATIAAFFAFAWIMIHSVKVHFAEQDINDLKEISATLERVLNHPDETQARRLMTLEDIVSGYSNVLISLADSHGKTVYHSPGAPDIREFTRDAIPDKDAQGGEVYLLSGPTMMMPGHGHGHMEHSNWRMINLPVGPLVDGKPIYTLYIALSIDFHLHYINDLMNKLIMTASVISILIVFIVLLAVHKGHAPIRSVSRQIQNITSKDLDVRLDPQTVPIELEQLVLSFNHMIERIEDVFTRQSNFSADIAHEIRTPITNLITQTEIALSQSRSQKELEDVLYSNLEELTRMAKMVSDMLFLAQADNNQLIPEKKMLNLADEVGKVFDFFEALAEDRGVELRFVGDECQVAGDPLMLRRALSNLLSNALRYTPTGETIVVRCQTVDHLVQVTVENPGTPIAPEHLPRLFDRFYRVDPSRQRKGEGSGIGLAIVKSIVVAHKGTVAVTSDVRGTRFVIILPA</sequence>
<evidence type="ECO:0000250" key="1">
    <source>
        <dbReference type="UniProtKB" id="P77485"/>
    </source>
</evidence>
<evidence type="ECO:0000255" key="2"/>
<evidence type="ECO:0000255" key="3">
    <source>
        <dbReference type="PROSITE-ProRule" id="PRU00102"/>
    </source>
</evidence>
<evidence type="ECO:0000255" key="4">
    <source>
        <dbReference type="PROSITE-ProRule" id="PRU00107"/>
    </source>
</evidence>
<dbReference type="EC" id="2.7.13.3" evidence="1"/>
<dbReference type="EMBL" id="AE014075">
    <property type="protein sequence ID" value="AAN79131.1"/>
    <property type="molecule type" value="Genomic_DNA"/>
</dbReference>
<dbReference type="RefSeq" id="WP_000253820.1">
    <property type="nucleotide sequence ID" value="NZ_CP051263.1"/>
</dbReference>
<dbReference type="SMR" id="Q8FK37"/>
<dbReference type="STRING" id="199310.c0656"/>
<dbReference type="KEGG" id="ecc:c0656"/>
<dbReference type="eggNOG" id="COG5002">
    <property type="taxonomic scope" value="Bacteria"/>
</dbReference>
<dbReference type="HOGENOM" id="CLU_000445_89_6_6"/>
<dbReference type="BioCyc" id="ECOL199310:C0656-MONOMER"/>
<dbReference type="BRENDA" id="2.7.13.3">
    <property type="organism ID" value="2026"/>
</dbReference>
<dbReference type="Proteomes" id="UP000001410">
    <property type="component" value="Chromosome"/>
</dbReference>
<dbReference type="GO" id="GO:0005886">
    <property type="term" value="C:plasma membrane"/>
    <property type="evidence" value="ECO:0007669"/>
    <property type="project" value="UniProtKB-SubCell"/>
</dbReference>
<dbReference type="GO" id="GO:0005524">
    <property type="term" value="F:ATP binding"/>
    <property type="evidence" value="ECO:0007669"/>
    <property type="project" value="UniProtKB-KW"/>
</dbReference>
<dbReference type="GO" id="GO:0000155">
    <property type="term" value="F:phosphorelay sensor kinase activity"/>
    <property type="evidence" value="ECO:0007669"/>
    <property type="project" value="InterPro"/>
</dbReference>
<dbReference type="CDD" id="cd06225">
    <property type="entry name" value="HAMP"/>
    <property type="match status" value="1"/>
</dbReference>
<dbReference type="CDD" id="cd00082">
    <property type="entry name" value="HisKA"/>
    <property type="match status" value="1"/>
</dbReference>
<dbReference type="FunFam" id="3.30.565.10:FF:000006">
    <property type="entry name" value="Sensor histidine kinase WalK"/>
    <property type="match status" value="1"/>
</dbReference>
<dbReference type="FunFam" id="1.10.287.130:FF:000001">
    <property type="entry name" value="Two-component sensor histidine kinase"/>
    <property type="match status" value="1"/>
</dbReference>
<dbReference type="Gene3D" id="1.10.287.130">
    <property type="match status" value="1"/>
</dbReference>
<dbReference type="Gene3D" id="6.10.340.10">
    <property type="match status" value="1"/>
</dbReference>
<dbReference type="Gene3D" id="3.30.565.10">
    <property type="entry name" value="Histidine kinase-like ATPase, C-terminal domain"/>
    <property type="match status" value="1"/>
</dbReference>
<dbReference type="InterPro" id="IPR048590">
    <property type="entry name" value="CusS-like_sensor"/>
</dbReference>
<dbReference type="InterPro" id="IPR006290">
    <property type="entry name" value="CztS_silS_copS"/>
</dbReference>
<dbReference type="InterPro" id="IPR003660">
    <property type="entry name" value="HAMP_dom"/>
</dbReference>
<dbReference type="InterPro" id="IPR036890">
    <property type="entry name" value="HATPase_C_sf"/>
</dbReference>
<dbReference type="InterPro" id="IPR005467">
    <property type="entry name" value="His_kinase_dom"/>
</dbReference>
<dbReference type="InterPro" id="IPR003661">
    <property type="entry name" value="HisK_dim/P_dom"/>
</dbReference>
<dbReference type="InterPro" id="IPR036097">
    <property type="entry name" value="HisK_dim/P_sf"/>
</dbReference>
<dbReference type="InterPro" id="IPR004358">
    <property type="entry name" value="Sig_transdc_His_kin-like_C"/>
</dbReference>
<dbReference type="InterPro" id="IPR050428">
    <property type="entry name" value="TCS_sensor_his_kinase"/>
</dbReference>
<dbReference type="NCBIfam" id="TIGR01386">
    <property type="entry name" value="cztS_silS_copS"/>
    <property type="match status" value="1"/>
</dbReference>
<dbReference type="NCBIfam" id="NF007345">
    <property type="entry name" value="PRK09835.1"/>
    <property type="match status" value="1"/>
</dbReference>
<dbReference type="PANTHER" id="PTHR45436:SF15">
    <property type="entry name" value="SENSOR HISTIDINE KINASE CUSS"/>
    <property type="match status" value="1"/>
</dbReference>
<dbReference type="PANTHER" id="PTHR45436">
    <property type="entry name" value="SENSOR HISTIDINE KINASE YKOH"/>
    <property type="match status" value="1"/>
</dbReference>
<dbReference type="Pfam" id="PF21085">
    <property type="entry name" value="CusS"/>
    <property type="match status" value="1"/>
</dbReference>
<dbReference type="Pfam" id="PF00672">
    <property type="entry name" value="HAMP"/>
    <property type="match status" value="1"/>
</dbReference>
<dbReference type="Pfam" id="PF02518">
    <property type="entry name" value="HATPase_c"/>
    <property type="match status" value="1"/>
</dbReference>
<dbReference type="Pfam" id="PF00512">
    <property type="entry name" value="HisKA"/>
    <property type="match status" value="1"/>
</dbReference>
<dbReference type="PRINTS" id="PR00344">
    <property type="entry name" value="BCTRLSENSOR"/>
</dbReference>
<dbReference type="SMART" id="SM00304">
    <property type="entry name" value="HAMP"/>
    <property type="match status" value="1"/>
</dbReference>
<dbReference type="SMART" id="SM00387">
    <property type="entry name" value="HATPase_c"/>
    <property type="match status" value="1"/>
</dbReference>
<dbReference type="SMART" id="SM00388">
    <property type="entry name" value="HisKA"/>
    <property type="match status" value="1"/>
</dbReference>
<dbReference type="SUPFAM" id="SSF55874">
    <property type="entry name" value="ATPase domain of HSP90 chaperone/DNA topoisomerase II/histidine kinase"/>
    <property type="match status" value="1"/>
</dbReference>
<dbReference type="SUPFAM" id="SSF47384">
    <property type="entry name" value="Homodimeric domain of signal transducing histidine kinase"/>
    <property type="match status" value="1"/>
</dbReference>
<dbReference type="PROSITE" id="PS50885">
    <property type="entry name" value="HAMP"/>
    <property type="match status" value="1"/>
</dbReference>
<dbReference type="PROSITE" id="PS50109">
    <property type="entry name" value="HIS_KIN"/>
    <property type="match status" value="1"/>
</dbReference>
<proteinExistence type="inferred from homology"/>
<organism>
    <name type="scientific">Escherichia coli O6:H1 (strain CFT073 / ATCC 700928 / UPEC)</name>
    <dbReference type="NCBI Taxonomy" id="199310"/>
    <lineage>
        <taxon>Bacteria</taxon>
        <taxon>Pseudomonadati</taxon>
        <taxon>Pseudomonadota</taxon>
        <taxon>Gammaproteobacteria</taxon>
        <taxon>Enterobacterales</taxon>
        <taxon>Enterobacteriaceae</taxon>
        <taxon>Escherichia</taxon>
    </lineage>
</organism>
<feature type="chain" id="PRO_0000074725" description="Sensor histidine kinase CusS">
    <location>
        <begin position="1"/>
        <end position="480"/>
    </location>
</feature>
<feature type="topological domain" description="Cytoplasmic" evidence="1">
    <location>
        <begin position="1"/>
        <end position="15"/>
    </location>
</feature>
<feature type="transmembrane region" description="Helical" evidence="2">
    <location>
        <begin position="16"/>
        <end position="36"/>
    </location>
</feature>
<feature type="topological domain" description="Periplasmic" evidence="1">
    <location>
        <begin position="37"/>
        <end position="186"/>
    </location>
</feature>
<feature type="transmembrane region" description="Helical" evidence="2">
    <location>
        <begin position="187"/>
        <end position="207"/>
    </location>
</feature>
<feature type="topological domain" description="Cytoplasmic" evidence="1">
    <location>
        <begin position="208"/>
        <end position="480"/>
    </location>
</feature>
<feature type="domain" description="HAMP" evidence="3">
    <location>
        <begin position="207"/>
        <end position="260"/>
    </location>
</feature>
<feature type="domain" description="Histidine kinase" evidence="4">
    <location>
        <begin position="268"/>
        <end position="480"/>
    </location>
</feature>
<feature type="modified residue" description="Phosphohistidine; by autocatalysis" evidence="4">
    <location>
        <position position="271"/>
    </location>
</feature>
<gene>
    <name type="primary">cusS</name>
    <name type="ordered locus">c0656</name>
</gene>
<name>CUSS_ECOL6</name>
<reference key="1">
    <citation type="journal article" date="2002" name="Proc. Natl. Acad. Sci. U.S.A.">
        <title>Extensive mosaic structure revealed by the complete genome sequence of uropathogenic Escherichia coli.</title>
        <authorList>
            <person name="Welch R.A."/>
            <person name="Burland V."/>
            <person name="Plunkett G. III"/>
            <person name="Redford P."/>
            <person name="Roesch P."/>
            <person name="Rasko D."/>
            <person name="Buckles E.L."/>
            <person name="Liou S.-R."/>
            <person name="Boutin A."/>
            <person name="Hackett J."/>
            <person name="Stroud D."/>
            <person name="Mayhew G.F."/>
            <person name="Rose D.J."/>
            <person name="Zhou S."/>
            <person name="Schwartz D.C."/>
            <person name="Perna N.T."/>
            <person name="Mobley H.L.T."/>
            <person name="Donnenberg M.S."/>
            <person name="Blattner F.R."/>
        </authorList>
    </citation>
    <scope>NUCLEOTIDE SEQUENCE [LARGE SCALE GENOMIC DNA]</scope>
    <source>
        <strain>CFT073 / ATCC 700928 / UPEC</strain>
    </source>
</reference>